<evidence type="ECO:0000255" key="1">
    <source>
        <dbReference type="PROSITE-ProRule" id="PRU00111"/>
    </source>
</evidence>
<accession>P06220</accession>
<sequence>MPRRTATLEDVARRGRVPADGLRRVLNRPEVVSARTREQVIRAMQALHYVPNRSAQLLAGKAAPSIGLITASVTLHAPSQIAAAIKSHASLHQLEVAIAMPAQADFVALQARLDELRAQHIRGVIVSLPLESATAERLVQDNPDMACLFLDVSPEADVCCVRFDHRDGCGACVRHLWEMGHREFGLLAGPESSVSARLRLASWREALHSLNIARSTTVFGDWSAASGWQKTFELLHLQPRISAIVVANDQMALGVLSALAQLNRSGSQAVSVTGYDDTADSLYFQPPLTTVAQDFDLLGKRAVERLIALMAAPQLRIRELLPTRLIVRQSAWPVAAAEDRQQTLAQLKALVEKL</sequence>
<name>LACI_KLEPN</name>
<feature type="chain" id="PRO_0000107964" description="Lactose operon repressor">
    <location>
        <begin position="1"/>
        <end position="354" status="greater than"/>
    </location>
</feature>
<feature type="domain" description="HTH lacI-type" evidence="1">
    <location>
        <begin position="6"/>
        <end position="60"/>
    </location>
</feature>
<feature type="DNA-binding region" description="H-T-H motif" evidence="1">
    <location>
        <begin position="8"/>
        <end position="27"/>
    </location>
</feature>
<feature type="non-terminal residue">
    <location>
        <position position="354"/>
    </location>
</feature>
<dbReference type="EMBL" id="M11441">
    <property type="protein sequence ID" value="AAA25081.2"/>
    <property type="molecule type" value="Genomic_DNA"/>
</dbReference>
<dbReference type="PIR" id="B24925">
    <property type="entry name" value="B24925"/>
</dbReference>
<dbReference type="SMR" id="P06220"/>
<dbReference type="GO" id="GO:0003700">
    <property type="term" value="F:DNA-binding transcription factor activity"/>
    <property type="evidence" value="ECO:0007669"/>
    <property type="project" value="TreeGrafter"/>
</dbReference>
<dbReference type="GO" id="GO:0000976">
    <property type="term" value="F:transcription cis-regulatory region binding"/>
    <property type="evidence" value="ECO:0007669"/>
    <property type="project" value="TreeGrafter"/>
</dbReference>
<dbReference type="CDD" id="cd01392">
    <property type="entry name" value="HTH_LacI"/>
    <property type="match status" value="1"/>
</dbReference>
<dbReference type="CDD" id="cd01574">
    <property type="entry name" value="PBP1_LacI"/>
    <property type="match status" value="1"/>
</dbReference>
<dbReference type="Gene3D" id="3.40.50.2300">
    <property type="match status" value="2"/>
</dbReference>
<dbReference type="Gene3D" id="1.10.260.40">
    <property type="entry name" value="lambda repressor-like DNA-binding domains"/>
    <property type="match status" value="1"/>
</dbReference>
<dbReference type="InterPro" id="IPR000843">
    <property type="entry name" value="HTH_LacI"/>
</dbReference>
<dbReference type="InterPro" id="IPR046335">
    <property type="entry name" value="LacI/GalR-like_sensor"/>
</dbReference>
<dbReference type="InterPro" id="IPR010982">
    <property type="entry name" value="Lambda_DNA-bd_dom_sf"/>
</dbReference>
<dbReference type="InterPro" id="IPR028082">
    <property type="entry name" value="Peripla_BP_I"/>
</dbReference>
<dbReference type="NCBIfam" id="NF007075">
    <property type="entry name" value="PRK09526.1"/>
    <property type="match status" value="1"/>
</dbReference>
<dbReference type="PANTHER" id="PTHR30146">
    <property type="entry name" value="LACI-RELATED TRANSCRIPTIONAL REPRESSOR"/>
    <property type="match status" value="1"/>
</dbReference>
<dbReference type="PANTHER" id="PTHR30146:SF153">
    <property type="entry name" value="LACTOSE OPERON REPRESSOR"/>
    <property type="match status" value="1"/>
</dbReference>
<dbReference type="Pfam" id="PF00356">
    <property type="entry name" value="LacI"/>
    <property type="match status" value="1"/>
</dbReference>
<dbReference type="Pfam" id="PF13377">
    <property type="entry name" value="Peripla_BP_3"/>
    <property type="match status" value="1"/>
</dbReference>
<dbReference type="SMART" id="SM00354">
    <property type="entry name" value="HTH_LACI"/>
    <property type="match status" value="1"/>
</dbReference>
<dbReference type="SUPFAM" id="SSF47413">
    <property type="entry name" value="lambda repressor-like DNA-binding domains"/>
    <property type="match status" value="1"/>
</dbReference>
<dbReference type="SUPFAM" id="SSF53822">
    <property type="entry name" value="Periplasmic binding protein-like I"/>
    <property type="match status" value="1"/>
</dbReference>
<dbReference type="PROSITE" id="PS00356">
    <property type="entry name" value="HTH_LACI_1"/>
    <property type="match status" value="1"/>
</dbReference>
<dbReference type="PROSITE" id="PS50932">
    <property type="entry name" value="HTH_LACI_2"/>
    <property type="match status" value="1"/>
</dbReference>
<reference key="1">
    <citation type="journal article" date="1985" name="J. Bacteriol.">
        <title>Nucleotide sequence of Klebsiella pneumoniae lac genes.</title>
        <authorList>
            <person name="Buvinger W.E."/>
            <person name="Riley M."/>
        </authorList>
    </citation>
    <scope>NUCLEOTIDE SEQUENCE [GENOMIC DNA]</scope>
</reference>
<gene>
    <name type="primary">lacI</name>
</gene>
<proteinExistence type="predicted"/>
<protein>
    <recommendedName>
        <fullName>Lactose operon repressor</fullName>
    </recommendedName>
</protein>
<comment type="function">
    <text>Repressor of the lactose operon. Binds lactose as an inducer.</text>
</comment>
<comment type="subunit">
    <text>Homotetramer.</text>
</comment>
<organism>
    <name type="scientific">Klebsiella pneumoniae</name>
    <dbReference type="NCBI Taxonomy" id="573"/>
    <lineage>
        <taxon>Bacteria</taxon>
        <taxon>Pseudomonadati</taxon>
        <taxon>Pseudomonadota</taxon>
        <taxon>Gammaproteobacteria</taxon>
        <taxon>Enterobacterales</taxon>
        <taxon>Enterobacteriaceae</taxon>
        <taxon>Klebsiella/Raoultella group</taxon>
        <taxon>Klebsiella</taxon>
        <taxon>Klebsiella pneumoniae complex</taxon>
    </lineage>
</organism>
<keyword id="KW-0238">DNA-binding</keyword>
<keyword id="KW-0678">Repressor</keyword>
<keyword id="KW-0804">Transcription</keyword>
<keyword id="KW-0805">Transcription regulation</keyword>